<accession>Q4ZMP1</accession>
<keyword id="KW-0963">Cytoplasm</keyword>
<keyword id="KW-0251">Elongation factor</keyword>
<keyword id="KW-0342">GTP-binding</keyword>
<keyword id="KW-0547">Nucleotide-binding</keyword>
<keyword id="KW-0648">Protein biosynthesis</keyword>
<comment type="function">
    <text evidence="1">Catalyzes the GTP-dependent ribosomal translocation step during translation elongation. During this step, the ribosome changes from the pre-translocational (PRE) to the post-translocational (POST) state as the newly formed A-site-bound peptidyl-tRNA and P-site-bound deacylated tRNA move to the P and E sites, respectively. Catalyzes the coordinated movement of the two tRNA molecules, the mRNA and conformational changes in the ribosome.</text>
</comment>
<comment type="subcellular location">
    <subcellularLocation>
        <location evidence="1">Cytoplasm</location>
    </subcellularLocation>
</comment>
<comment type="similarity">
    <text evidence="1">Belongs to the TRAFAC class translation factor GTPase superfamily. Classic translation factor GTPase family. EF-G/EF-2 subfamily.</text>
</comment>
<reference key="1">
    <citation type="journal article" date="2005" name="Proc. Natl. Acad. Sci. U.S.A.">
        <title>Comparison of the complete genome sequences of Pseudomonas syringae pv. syringae B728a and pv. tomato DC3000.</title>
        <authorList>
            <person name="Feil H."/>
            <person name="Feil W.S."/>
            <person name="Chain P."/>
            <person name="Larimer F."/>
            <person name="Dibartolo G."/>
            <person name="Copeland A."/>
            <person name="Lykidis A."/>
            <person name="Trong S."/>
            <person name="Nolan M."/>
            <person name="Goltsman E."/>
            <person name="Thiel J."/>
            <person name="Malfatti S."/>
            <person name="Loper J.E."/>
            <person name="Lapidus A."/>
            <person name="Detter J.C."/>
            <person name="Land M."/>
            <person name="Richardson P.M."/>
            <person name="Kyrpides N.C."/>
            <person name="Ivanova N."/>
            <person name="Lindow S.E."/>
        </authorList>
    </citation>
    <scope>NUCLEOTIDE SEQUENCE [LARGE SCALE GENOMIC DNA]</scope>
    <source>
        <strain>B728a</strain>
    </source>
</reference>
<feature type="chain" id="PRO_0000225232" description="Elongation factor G">
    <location>
        <begin position="1"/>
        <end position="701"/>
    </location>
</feature>
<feature type="domain" description="tr-type G">
    <location>
        <begin position="8"/>
        <end position="291"/>
    </location>
</feature>
<feature type="binding site" evidence="1">
    <location>
        <begin position="17"/>
        <end position="24"/>
    </location>
    <ligand>
        <name>GTP</name>
        <dbReference type="ChEBI" id="CHEBI:37565"/>
    </ligand>
</feature>
<feature type="binding site" evidence="1">
    <location>
        <begin position="89"/>
        <end position="93"/>
    </location>
    <ligand>
        <name>GTP</name>
        <dbReference type="ChEBI" id="CHEBI:37565"/>
    </ligand>
</feature>
<feature type="binding site" evidence="1">
    <location>
        <begin position="143"/>
        <end position="146"/>
    </location>
    <ligand>
        <name>GTP</name>
        <dbReference type="ChEBI" id="CHEBI:37565"/>
    </ligand>
</feature>
<sequence>MARTTPIGRYRNIGIVAHVDAGKTTTTERVLFYTGKSHKMGEVHDGAATTDWMVQEQERGITITSAAITAFWQGSEKQHKDQFRFNVIDTPGHVDFTIEVERSLRVLDGAVVVFCGTSGVEPQSETVWRQANKYGVPRIVYVNKMDRAGANFLRVIAQIKQRLGHTPVPIQLAIGAEDNFQGQIDLMSMEAVYWNDADKGMVPVRKPIPAELQELADEWRSNMVEAAAEASEELMNKYVDGEELTNDEIKAALRQRTIAGEIVLAVCGSSFKNKGVPLVLDAVIDYLPAPTDIPAIKGSDPDNEEKLMERHADDNEPFSALAFKIATDPFVGTLTFVRVYSGVLASGDGVINSVKGKKERVGRMVQMHANAREEIKEVRAGDIAALIGMKDVTTGETLCNADKPIILVRMDFPEPVISVAVEPKTKDDQEKMGIALGKLAQEDPSFRVKTDEETGQTIISGMGELHLDILVDRMRREFNVEANIGKPQVSYRERITKNCEIEGKFVRQSGGRGQFGHCWIRFAPADEGQEGLQFVNEVVGGVVPKEYIPAIQKGIEEQMKNGVVAGYPLIGLKATVFDGSYHDVDSNEMAFKVAASMATKQLAQKGGGELLEPIMAVEVVTPEDYMGDVMGDLNRRRGMILGMEDTVSGKVIRAEVPLGEMFGYATDVRSMSQGRASYSMEFKKYNTAPSHIVETVTKKQG</sequence>
<gene>
    <name evidence="1" type="primary">fusA</name>
    <name type="ordered locus">Psyr_4551</name>
</gene>
<proteinExistence type="inferred from homology"/>
<protein>
    <recommendedName>
        <fullName evidence="1">Elongation factor G</fullName>
        <shortName evidence="1">EF-G</shortName>
    </recommendedName>
</protein>
<organism>
    <name type="scientific">Pseudomonas syringae pv. syringae (strain B728a)</name>
    <dbReference type="NCBI Taxonomy" id="205918"/>
    <lineage>
        <taxon>Bacteria</taxon>
        <taxon>Pseudomonadati</taxon>
        <taxon>Pseudomonadota</taxon>
        <taxon>Gammaproteobacteria</taxon>
        <taxon>Pseudomonadales</taxon>
        <taxon>Pseudomonadaceae</taxon>
        <taxon>Pseudomonas</taxon>
        <taxon>Pseudomonas syringae</taxon>
    </lineage>
</organism>
<dbReference type="EMBL" id="CP000075">
    <property type="protein sequence ID" value="AAY39581.1"/>
    <property type="molecule type" value="Genomic_DNA"/>
</dbReference>
<dbReference type="RefSeq" id="WP_011269094.1">
    <property type="nucleotide sequence ID" value="NC_007005.1"/>
</dbReference>
<dbReference type="RefSeq" id="YP_237619.1">
    <property type="nucleotide sequence ID" value="NC_007005.1"/>
</dbReference>
<dbReference type="SMR" id="Q4ZMP1"/>
<dbReference type="STRING" id="205918.Psyr_4551"/>
<dbReference type="KEGG" id="psb:Psyr_4551"/>
<dbReference type="PATRIC" id="fig|205918.7.peg.4690"/>
<dbReference type="eggNOG" id="COG0480">
    <property type="taxonomic scope" value="Bacteria"/>
</dbReference>
<dbReference type="HOGENOM" id="CLU_002794_4_1_6"/>
<dbReference type="OrthoDB" id="9804431at2"/>
<dbReference type="Proteomes" id="UP000000426">
    <property type="component" value="Chromosome"/>
</dbReference>
<dbReference type="GO" id="GO:0005737">
    <property type="term" value="C:cytoplasm"/>
    <property type="evidence" value="ECO:0007669"/>
    <property type="project" value="UniProtKB-SubCell"/>
</dbReference>
<dbReference type="GO" id="GO:0005525">
    <property type="term" value="F:GTP binding"/>
    <property type="evidence" value="ECO:0007669"/>
    <property type="project" value="UniProtKB-UniRule"/>
</dbReference>
<dbReference type="GO" id="GO:0003924">
    <property type="term" value="F:GTPase activity"/>
    <property type="evidence" value="ECO:0007669"/>
    <property type="project" value="InterPro"/>
</dbReference>
<dbReference type="GO" id="GO:0097216">
    <property type="term" value="F:guanosine tetraphosphate binding"/>
    <property type="evidence" value="ECO:0007669"/>
    <property type="project" value="UniProtKB-ARBA"/>
</dbReference>
<dbReference type="GO" id="GO:0003746">
    <property type="term" value="F:translation elongation factor activity"/>
    <property type="evidence" value="ECO:0007669"/>
    <property type="project" value="UniProtKB-UniRule"/>
</dbReference>
<dbReference type="GO" id="GO:0032790">
    <property type="term" value="P:ribosome disassembly"/>
    <property type="evidence" value="ECO:0007669"/>
    <property type="project" value="TreeGrafter"/>
</dbReference>
<dbReference type="CDD" id="cd01886">
    <property type="entry name" value="EF-G"/>
    <property type="match status" value="1"/>
</dbReference>
<dbReference type="CDD" id="cd16262">
    <property type="entry name" value="EFG_III"/>
    <property type="match status" value="1"/>
</dbReference>
<dbReference type="CDD" id="cd01434">
    <property type="entry name" value="EFG_mtEFG1_IV"/>
    <property type="match status" value="1"/>
</dbReference>
<dbReference type="CDD" id="cd03713">
    <property type="entry name" value="EFG_mtEFG_C"/>
    <property type="match status" value="1"/>
</dbReference>
<dbReference type="CDD" id="cd04088">
    <property type="entry name" value="EFG_mtEFG_II"/>
    <property type="match status" value="1"/>
</dbReference>
<dbReference type="FunFam" id="2.40.30.10:FF:000006">
    <property type="entry name" value="Elongation factor G"/>
    <property type="match status" value="1"/>
</dbReference>
<dbReference type="FunFam" id="3.30.230.10:FF:000003">
    <property type="entry name" value="Elongation factor G"/>
    <property type="match status" value="1"/>
</dbReference>
<dbReference type="FunFam" id="3.30.70.240:FF:000001">
    <property type="entry name" value="Elongation factor G"/>
    <property type="match status" value="1"/>
</dbReference>
<dbReference type="FunFam" id="3.30.70.870:FF:000001">
    <property type="entry name" value="Elongation factor G"/>
    <property type="match status" value="1"/>
</dbReference>
<dbReference type="FunFam" id="3.40.50.300:FF:000029">
    <property type="entry name" value="Elongation factor G"/>
    <property type="match status" value="1"/>
</dbReference>
<dbReference type="Gene3D" id="3.30.230.10">
    <property type="match status" value="1"/>
</dbReference>
<dbReference type="Gene3D" id="3.30.70.240">
    <property type="match status" value="1"/>
</dbReference>
<dbReference type="Gene3D" id="3.30.70.870">
    <property type="entry name" value="Elongation Factor G (Translational Gtpase), domain 3"/>
    <property type="match status" value="1"/>
</dbReference>
<dbReference type="Gene3D" id="3.40.50.300">
    <property type="entry name" value="P-loop containing nucleotide triphosphate hydrolases"/>
    <property type="match status" value="1"/>
</dbReference>
<dbReference type="Gene3D" id="2.40.30.10">
    <property type="entry name" value="Translation factors"/>
    <property type="match status" value="1"/>
</dbReference>
<dbReference type="HAMAP" id="MF_00054_B">
    <property type="entry name" value="EF_G_EF_2_B"/>
    <property type="match status" value="1"/>
</dbReference>
<dbReference type="InterPro" id="IPR041095">
    <property type="entry name" value="EFG_II"/>
</dbReference>
<dbReference type="InterPro" id="IPR009022">
    <property type="entry name" value="EFG_III"/>
</dbReference>
<dbReference type="InterPro" id="IPR035647">
    <property type="entry name" value="EFG_III/V"/>
</dbReference>
<dbReference type="InterPro" id="IPR047872">
    <property type="entry name" value="EFG_IV"/>
</dbReference>
<dbReference type="InterPro" id="IPR035649">
    <property type="entry name" value="EFG_V"/>
</dbReference>
<dbReference type="InterPro" id="IPR000640">
    <property type="entry name" value="EFG_V-like"/>
</dbReference>
<dbReference type="InterPro" id="IPR004161">
    <property type="entry name" value="EFTu-like_2"/>
</dbReference>
<dbReference type="InterPro" id="IPR031157">
    <property type="entry name" value="G_TR_CS"/>
</dbReference>
<dbReference type="InterPro" id="IPR027417">
    <property type="entry name" value="P-loop_NTPase"/>
</dbReference>
<dbReference type="InterPro" id="IPR020568">
    <property type="entry name" value="Ribosomal_Su5_D2-typ_SF"/>
</dbReference>
<dbReference type="InterPro" id="IPR014721">
    <property type="entry name" value="Ribsml_uS5_D2-typ_fold_subgr"/>
</dbReference>
<dbReference type="InterPro" id="IPR005225">
    <property type="entry name" value="Small_GTP-bd"/>
</dbReference>
<dbReference type="InterPro" id="IPR000795">
    <property type="entry name" value="T_Tr_GTP-bd_dom"/>
</dbReference>
<dbReference type="InterPro" id="IPR009000">
    <property type="entry name" value="Transl_B-barrel_sf"/>
</dbReference>
<dbReference type="InterPro" id="IPR004540">
    <property type="entry name" value="Transl_elong_EFG/EF2"/>
</dbReference>
<dbReference type="InterPro" id="IPR005517">
    <property type="entry name" value="Transl_elong_EFG/EF2_IV"/>
</dbReference>
<dbReference type="NCBIfam" id="TIGR00484">
    <property type="entry name" value="EF-G"/>
    <property type="match status" value="1"/>
</dbReference>
<dbReference type="NCBIfam" id="NF009381">
    <property type="entry name" value="PRK12740.1-5"/>
    <property type="match status" value="1"/>
</dbReference>
<dbReference type="NCBIfam" id="TIGR00231">
    <property type="entry name" value="small_GTP"/>
    <property type="match status" value="1"/>
</dbReference>
<dbReference type="PANTHER" id="PTHR43261:SF1">
    <property type="entry name" value="RIBOSOME-RELEASING FACTOR 2, MITOCHONDRIAL"/>
    <property type="match status" value="1"/>
</dbReference>
<dbReference type="PANTHER" id="PTHR43261">
    <property type="entry name" value="TRANSLATION ELONGATION FACTOR G-RELATED"/>
    <property type="match status" value="1"/>
</dbReference>
<dbReference type="Pfam" id="PF00679">
    <property type="entry name" value="EFG_C"/>
    <property type="match status" value="1"/>
</dbReference>
<dbReference type="Pfam" id="PF14492">
    <property type="entry name" value="EFG_III"/>
    <property type="match status" value="1"/>
</dbReference>
<dbReference type="Pfam" id="PF03764">
    <property type="entry name" value="EFG_IV"/>
    <property type="match status" value="1"/>
</dbReference>
<dbReference type="Pfam" id="PF00009">
    <property type="entry name" value="GTP_EFTU"/>
    <property type="match status" value="1"/>
</dbReference>
<dbReference type="Pfam" id="PF03144">
    <property type="entry name" value="GTP_EFTU_D2"/>
    <property type="match status" value="1"/>
</dbReference>
<dbReference type="PRINTS" id="PR00315">
    <property type="entry name" value="ELONGATNFCT"/>
</dbReference>
<dbReference type="SMART" id="SM00838">
    <property type="entry name" value="EFG_C"/>
    <property type="match status" value="1"/>
</dbReference>
<dbReference type="SMART" id="SM00889">
    <property type="entry name" value="EFG_IV"/>
    <property type="match status" value="1"/>
</dbReference>
<dbReference type="SUPFAM" id="SSF54980">
    <property type="entry name" value="EF-G C-terminal domain-like"/>
    <property type="match status" value="2"/>
</dbReference>
<dbReference type="SUPFAM" id="SSF52540">
    <property type="entry name" value="P-loop containing nucleoside triphosphate hydrolases"/>
    <property type="match status" value="1"/>
</dbReference>
<dbReference type="SUPFAM" id="SSF54211">
    <property type="entry name" value="Ribosomal protein S5 domain 2-like"/>
    <property type="match status" value="1"/>
</dbReference>
<dbReference type="SUPFAM" id="SSF50447">
    <property type="entry name" value="Translation proteins"/>
    <property type="match status" value="1"/>
</dbReference>
<dbReference type="PROSITE" id="PS00301">
    <property type="entry name" value="G_TR_1"/>
    <property type="match status" value="1"/>
</dbReference>
<dbReference type="PROSITE" id="PS51722">
    <property type="entry name" value="G_TR_2"/>
    <property type="match status" value="1"/>
</dbReference>
<evidence type="ECO:0000255" key="1">
    <source>
        <dbReference type="HAMAP-Rule" id="MF_00054"/>
    </source>
</evidence>
<name>EFG_PSEU2</name>